<sequence>MRMRHKPWANDFLAENADIAISDPAQYKGRWNTVFGNDNPIHIEVGTGKGQFISGMAKQNPDINYIGIELFKSVIVTAVQKVKDSGAHNVRLLNIDAETLNDVFERGEIKRVYLNFSDPWPKNRHEKRRLTFKTFLKKYEEVMGETGEIHFKTDNRGLFEYSLKSFSEYGLLLTEVSLDLHNSDPKGNIMTEYEEKFSALGQPIYRAEVEWRTKDRL</sequence>
<keyword id="KW-0489">Methyltransferase</keyword>
<keyword id="KW-0949">S-adenosyl-L-methionine</keyword>
<keyword id="KW-0808">Transferase</keyword>
<keyword id="KW-0819">tRNA processing</keyword>
<protein>
    <recommendedName>
        <fullName evidence="2">tRNA (guanine-N(7)-)-methyltransferase</fullName>
        <ecNumber evidence="2">2.1.1.33</ecNumber>
    </recommendedName>
    <alternativeName>
        <fullName evidence="2">tRNA (guanine(46)-N(7))-methyltransferase</fullName>
    </alternativeName>
    <alternativeName>
        <fullName evidence="2">tRNA(m7G46)-methyltransferase</fullName>
    </alternativeName>
</protein>
<feature type="chain" id="PRO_1000064387" description="tRNA (guanine-N(7)-)-methyltransferase">
    <location>
        <begin position="1"/>
        <end position="217"/>
    </location>
</feature>
<feature type="region of interest" description="Interaction with RNA" evidence="2">
    <location>
        <begin position="124"/>
        <end position="129"/>
    </location>
</feature>
<feature type="active site" evidence="1">
    <location>
        <position position="118"/>
    </location>
</feature>
<feature type="binding site" evidence="2">
    <location>
        <position position="44"/>
    </location>
    <ligand>
        <name>S-adenosyl-L-methionine</name>
        <dbReference type="ChEBI" id="CHEBI:59789"/>
    </ligand>
</feature>
<feature type="binding site" evidence="2">
    <location>
        <position position="69"/>
    </location>
    <ligand>
        <name>S-adenosyl-L-methionine</name>
        <dbReference type="ChEBI" id="CHEBI:59789"/>
    </ligand>
</feature>
<feature type="binding site" evidence="2">
    <location>
        <position position="96"/>
    </location>
    <ligand>
        <name>S-adenosyl-L-methionine</name>
        <dbReference type="ChEBI" id="CHEBI:59789"/>
    </ligand>
</feature>
<feature type="binding site" evidence="2">
    <location>
        <position position="118"/>
    </location>
    <ligand>
        <name>S-adenosyl-L-methionine</name>
        <dbReference type="ChEBI" id="CHEBI:59789"/>
    </ligand>
</feature>
<feature type="binding site" evidence="2">
    <location>
        <position position="122"/>
    </location>
    <ligand>
        <name>substrate</name>
    </ligand>
</feature>
<feature type="binding site" evidence="2">
    <location>
        <position position="154"/>
    </location>
    <ligand>
        <name>substrate</name>
    </ligand>
</feature>
<feature type="binding site" evidence="2">
    <location>
        <begin position="191"/>
        <end position="194"/>
    </location>
    <ligand>
        <name>substrate</name>
    </ligand>
</feature>
<accession>A7Z7T3</accession>
<name>TRMB_BACVZ</name>
<dbReference type="EC" id="2.1.1.33" evidence="2"/>
<dbReference type="EMBL" id="CP000560">
    <property type="protein sequence ID" value="ABS75059.1"/>
    <property type="molecule type" value="Genomic_DNA"/>
</dbReference>
<dbReference type="RefSeq" id="WP_003152359.1">
    <property type="nucleotide sequence ID" value="NC_009725.2"/>
</dbReference>
<dbReference type="SMR" id="A7Z7T3"/>
<dbReference type="GeneID" id="93081841"/>
<dbReference type="KEGG" id="bay:RBAM_027010"/>
<dbReference type="HOGENOM" id="CLU_050910_2_1_9"/>
<dbReference type="UniPathway" id="UPA00989"/>
<dbReference type="Proteomes" id="UP000001120">
    <property type="component" value="Chromosome"/>
</dbReference>
<dbReference type="GO" id="GO:0043527">
    <property type="term" value="C:tRNA methyltransferase complex"/>
    <property type="evidence" value="ECO:0007669"/>
    <property type="project" value="TreeGrafter"/>
</dbReference>
<dbReference type="GO" id="GO:0008176">
    <property type="term" value="F:tRNA (guanine(46)-N7)-methyltransferase activity"/>
    <property type="evidence" value="ECO:0007669"/>
    <property type="project" value="UniProtKB-UniRule"/>
</dbReference>
<dbReference type="CDD" id="cd02440">
    <property type="entry name" value="AdoMet_MTases"/>
    <property type="match status" value="1"/>
</dbReference>
<dbReference type="FunFam" id="3.40.50.150:FF:000035">
    <property type="entry name" value="tRNA (guanine-N(7)-)-methyltransferase"/>
    <property type="match status" value="1"/>
</dbReference>
<dbReference type="Gene3D" id="3.40.50.150">
    <property type="entry name" value="Vaccinia Virus protein VP39"/>
    <property type="match status" value="1"/>
</dbReference>
<dbReference type="HAMAP" id="MF_01057">
    <property type="entry name" value="tRNA_methyltr_TrmB"/>
    <property type="match status" value="1"/>
</dbReference>
<dbReference type="InterPro" id="IPR029063">
    <property type="entry name" value="SAM-dependent_MTases_sf"/>
</dbReference>
<dbReference type="InterPro" id="IPR003358">
    <property type="entry name" value="tRNA_(Gua-N-7)_MeTrfase_Trmb"/>
</dbReference>
<dbReference type="InterPro" id="IPR055361">
    <property type="entry name" value="tRNA_methyltr_TrmB_bact"/>
</dbReference>
<dbReference type="NCBIfam" id="NF001080">
    <property type="entry name" value="PRK00121.2-2"/>
    <property type="match status" value="1"/>
</dbReference>
<dbReference type="NCBIfam" id="TIGR00091">
    <property type="entry name" value="tRNA (guanosine(46)-N7)-methyltransferase TrmB"/>
    <property type="match status" value="1"/>
</dbReference>
<dbReference type="PANTHER" id="PTHR23417">
    <property type="entry name" value="3-DEOXY-D-MANNO-OCTULOSONIC-ACID TRANSFERASE/TRNA GUANINE-N 7 - -METHYLTRANSFERASE"/>
    <property type="match status" value="1"/>
</dbReference>
<dbReference type="PANTHER" id="PTHR23417:SF14">
    <property type="entry name" value="PENTACOTRIPEPTIDE-REPEAT REGION OF PRORP DOMAIN-CONTAINING PROTEIN"/>
    <property type="match status" value="1"/>
</dbReference>
<dbReference type="Pfam" id="PF02390">
    <property type="entry name" value="Methyltransf_4"/>
    <property type="match status" value="1"/>
</dbReference>
<dbReference type="SUPFAM" id="SSF53335">
    <property type="entry name" value="S-adenosyl-L-methionine-dependent methyltransferases"/>
    <property type="match status" value="1"/>
</dbReference>
<dbReference type="PROSITE" id="PS51625">
    <property type="entry name" value="SAM_MT_TRMB"/>
    <property type="match status" value="1"/>
</dbReference>
<reference key="1">
    <citation type="journal article" date="2007" name="Nat. Biotechnol.">
        <title>Comparative analysis of the complete genome sequence of the plant growth-promoting bacterium Bacillus amyloliquefaciens FZB42.</title>
        <authorList>
            <person name="Chen X.H."/>
            <person name="Koumoutsi A."/>
            <person name="Scholz R."/>
            <person name="Eisenreich A."/>
            <person name="Schneider K."/>
            <person name="Heinemeyer I."/>
            <person name="Morgenstern B."/>
            <person name="Voss B."/>
            <person name="Hess W.R."/>
            <person name="Reva O."/>
            <person name="Junge H."/>
            <person name="Voigt B."/>
            <person name="Jungblut P.R."/>
            <person name="Vater J."/>
            <person name="Suessmuth R."/>
            <person name="Liesegang H."/>
            <person name="Strittmatter A."/>
            <person name="Gottschalk G."/>
            <person name="Borriss R."/>
        </authorList>
    </citation>
    <scope>NUCLEOTIDE SEQUENCE [LARGE SCALE GENOMIC DNA]</scope>
    <source>
        <strain>DSM 23117 / BGSC 10A6 / LMG 26770 / FZB42</strain>
    </source>
</reference>
<organism>
    <name type="scientific">Bacillus velezensis (strain DSM 23117 / BGSC 10A6 / LMG 26770 / FZB42)</name>
    <name type="common">Bacillus amyloliquefaciens subsp. plantarum</name>
    <dbReference type="NCBI Taxonomy" id="326423"/>
    <lineage>
        <taxon>Bacteria</taxon>
        <taxon>Bacillati</taxon>
        <taxon>Bacillota</taxon>
        <taxon>Bacilli</taxon>
        <taxon>Bacillales</taxon>
        <taxon>Bacillaceae</taxon>
        <taxon>Bacillus</taxon>
        <taxon>Bacillus amyloliquefaciens group</taxon>
    </lineage>
</organism>
<proteinExistence type="inferred from homology"/>
<gene>
    <name evidence="2" type="primary">trmB</name>
    <name type="ordered locus">RBAM_027010</name>
</gene>
<evidence type="ECO:0000250" key="1"/>
<evidence type="ECO:0000255" key="2">
    <source>
        <dbReference type="HAMAP-Rule" id="MF_01057"/>
    </source>
</evidence>
<comment type="function">
    <text evidence="2">Catalyzes the formation of N(7)-methylguanine at position 46 (m7G46) in tRNA.</text>
</comment>
<comment type="catalytic activity">
    <reaction evidence="2">
        <text>guanosine(46) in tRNA + S-adenosyl-L-methionine = N(7)-methylguanosine(46) in tRNA + S-adenosyl-L-homocysteine</text>
        <dbReference type="Rhea" id="RHEA:42708"/>
        <dbReference type="Rhea" id="RHEA-COMP:10188"/>
        <dbReference type="Rhea" id="RHEA-COMP:10189"/>
        <dbReference type="ChEBI" id="CHEBI:57856"/>
        <dbReference type="ChEBI" id="CHEBI:59789"/>
        <dbReference type="ChEBI" id="CHEBI:74269"/>
        <dbReference type="ChEBI" id="CHEBI:74480"/>
        <dbReference type="EC" id="2.1.1.33"/>
    </reaction>
</comment>
<comment type="pathway">
    <text evidence="2">tRNA modification; N(7)-methylguanine-tRNA biosynthesis.</text>
</comment>
<comment type="similarity">
    <text evidence="2">Belongs to the class I-like SAM-binding methyltransferase superfamily. TrmB family.</text>
</comment>